<proteinExistence type="inferred from homology"/>
<dbReference type="EC" id="3.4.21.92" evidence="1"/>
<dbReference type="EMBL" id="CP000238">
    <property type="protein sequence ID" value="ABF14187.1"/>
    <property type="molecule type" value="Genomic_DNA"/>
</dbReference>
<dbReference type="RefSeq" id="WP_011520448.1">
    <property type="nucleotide sequence ID" value="NC_007984.1"/>
</dbReference>
<dbReference type="SMR" id="Q1LTJ9"/>
<dbReference type="STRING" id="374463.BCI_0265"/>
<dbReference type="MEROPS" id="S14.001"/>
<dbReference type="KEGG" id="bci:BCI_0265"/>
<dbReference type="HOGENOM" id="CLU_058707_3_2_6"/>
<dbReference type="OrthoDB" id="9802800at2"/>
<dbReference type="Proteomes" id="UP000002427">
    <property type="component" value="Chromosome"/>
</dbReference>
<dbReference type="GO" id="GO:0005737">
    <property type="term" value="C:cytoplasm"/>
    <property type="evidence" value="ECO:0007669"/>
    <property type="project" value="UniProtKB-SubCell"/>
</dbReference>
<dbReference type="GO" id="GO:0009368">
    <property type="term" value="C:endopeptidase Clp complex"/>
    <property type="evidence" value="ECO:0007669"/>
    <property type="project" value="TreeGrafter"/>
</dbReference>
<dbReference type="GO" id="GO:0004176">
    <property type="term" value="F:ATP-dependent peptidase activity"/>
    <property type="evidence" value="ECO:0007669"/>
    <property type="project" value="InterPro"/>
</dbReference>
<dbReference type="GO" id="GO:0051117">
    <property type="term" value="F:ATPase binding"/>
    <property type="evidence" value="ECO:0007669"/>
    <property type="project" value="TreeGrafter"/>
</dbReference>
<dbReference type="GO" id="GO:0004252">
    <property type="term" value="F:serine-type endopeptidase activity"/>
    <property type="evidence" value="ECO:0007669"/>
    <property type="project" value="UniProtKB-UniRule"/>
</dbReference>
<dbReference type="GO" id="GO:0006515">
    <property type="term" value="P:protein quality control for misfolded or incompletely synthesized proteins"/>
    <property type="evidence" value="ECO:0007669"/>
    <property type="project" value="TreeGrafter"/>
</dbReference>
<dbReference type="CDD" id="cd07017">
    <property type="entry name" value="S14_ClpP_2"/>
    <property type="match status" value="1"/>
</dbReference>
<dbReference type="FunFam" id="3.90.226.10:FF:000001">
    <property type="entry name" value="ATP-dependent Clp protease proteolytic subunit"/>
    <property type="match status" value="1"/>
</dbReference>
<dbReference type="Gene3D" id="3.90.226.10">
    <property type="entry name" value="2-enoyl-CoA Hydratase, Chain A, domain 1"/>
    <property type="match status" value="1"/>
</dbReference>
<dbReference type="HAMAP" id="MF_00444">
    <property type="entry name" value="ClpP"/>
    <property type="match status" value="1"/>
</dbReference>
<dbReference type="InterPro" id="IPR001907">
    <property type="entry name" value="ClpP"/>
</dbReference>
<dbReference type="InterPro" id="IPR029045">
    <property type="entry name" value="ClpP/crotonase-like_dom_sf"/>
</dbReference>
<dbReference type="InterPro" id="IPR023562">
    <property type="entry name" value="ClpP/TepA"/>
</dbReference>
<dbReference type="InterPro" id="IPR033135">
    <property type="entry name" value="ClpP_His_AS"/>
</dbReference>
<dbReference type="InterPro" id="IPR018215">
    <property type="entry name" value="ClpP_Ser_AS"/>
</dbReference>
<dbReference type="NCBIfam" id="TIGR00493">
    <property type="entry name" value="clpP"/>
    <property type="match status" value="1"/>
</dbReference>
<dbReference type="NCBIfam" id="NF001368">
    <property type="entry name" value="PRK00277.1"/>
    <property type="match status" value="1"/>
</dbReference>
<dbReference type="NCBIfam" id="NF009205">
    <property type="entry name" value="PRK12553.1"/>
    <property type="match status" value="1"/>
</dbReference>
<dbReference type="PANTHER" id="PTHR10381">
    <property type="entry name" value="ATP-DEPENDENT CLP PROTEASE PROTEOLYTIC SUBUNIT"/>
    <property type="match status" value="1"/>
</dbReference>
<dbReference type="PANTHER" id="PTHR10381:SF70">
    <property type="entry name" value="ATP-DEPENDENT CLP PROTEASE PROTEOLYTIC SUBUNIT"/>
    <property type="match status" value="1"/>
</dbReference>
<dbReference type="Pfam" id="PF00574">
    <property type="entry name" value="CLP_protease"/>
    <property type="match status" value="1"/>
</dbReference>
<dbReference type="PRINTS" id="PR00127">
    <property type="entry name" value="CLPPROTEASEP"/>
</dbReference>
<dbReference type="SUPFAM" id="SSF52096">
    <property type="entry name" value="ClpP/crotonase"/>
    <property type="match status" value="1"/>
</dbReference>
<dbReference type="PROSITE" id="PS00382">
    <property type="entry name" value="CLP_PROTEASE_HIS"/>
    <property type="match status" value="1"/>
</dbReference>
<dbReference type="PROSITE" id="PS00381">
    <property type="entry name" value="CLP_PROTEASE_SER"/>
    <property type="match status" value="1"/>
</dbReference>
<name>CLPP_BAUCH</name>
<evidence type="ECO:0000255" key="1">
    <source>
        <dbReference type="HAMAP-Rule" id="MF_00444"/>
    </source>
</evidence>
<accession>Q1LTJ9</accession>
<protein>
    <recommendedName>
        <fullName evidence="1">ATP-dependent Clp protease proteolytic subunit</fullName>
        <ecNumber evidence="1">3.4.21.92</ecNumber>
    </recommendedName>
    <alternativeName>
        <fullName evidence="1">Endopeptidase Clp</fullName>
    </alternativeName>
</protein>
<comment type="function">
    <text evidence="1">Cleaves peptides in various proteins in a process that requires ATP hydrolysis. Has a chymotrypsin-like activity. Plays a major role in the degradation of misfolded proteins.</text>
</comment>
<comment type="catalytic activity">
    <reaction evidence="1">
        <text>Hydrolysis of proteins to small peptides in the presence of ATP and magnesium. alpha-casein is the usual test substrate. In the absence of ATP, only oligopeptides shorter than five residues are hydrolyzed (such as succinyl-Leu-Tyr-|-NHMec, and Leu-Tyr-Leu-|-Tyr-Trp, in which cleavage of the -Tyr-|-Leu- and -Tyr-|-Trp bonds also occurs).</text>
        <dbReference type="EC" id="3.4.21.92"/>
    </reaction>
</comment>
<comment type="subunit">
    <text evidence="1">Fourteen ClpP subunits assemble into 2 heptameric rings which stack back to back to give a disk-like structure with a central cavity, resembling the structure of eukaryotic proteasomes.</text>
</comment>
<comment type="subcellular location">
    <subcellularLocation>
        <location evidence="1">Cytoplasm</location>
    </subcellularLocation>
</comment>
<comment type="similarity">
    <text evidence="1">Belongs to the peptidase S14 family.</text>
</comment>
<gene>
    <name evidence="1" type="primary">clpP</name>
    <name type="ordered locus">BCI_0265</name>
</gene>
<organism>
    <name type="scientific">Baumannia cicadellinicola subsp. Homalodisca coagulata</name>
    <dbReference type="NCBI Taxonomy" id="374463"/>
    <lineage>
        <taxon>Bacteria</taxon>
        <taxon>Pseudomonadati</taxon>
        <taxon>Pseudomonadota</taxon>
        <taxon>Gammaproteobacteria</taxon>
        <taxon>Candidatus Palibaumannia</taxon>
    </lineage>
</organism>
<sequence length="205" mass="23147">MSYSCEYTPLNMALVPMVVERTLRGERSYDIFSRLLKERIIFMTGKVEDYMANIIVAQMIFLEAENPEKDIYLYINSPGGNITSGMSIYDTMQFIKPNVSTFCMGQAASMGAFLLAAGTKGKRFCLPNARMMIHQPMGGFQGQATDIQIHAKEILKVKNRMNELMAKHIGKTLQVIEQDTERDRFLSANEAVDYGLVDAILSHRI</sequence>
<reference key="1">
    <citation type="journal article" date="2006" name="PLoS Biol.">
        <title>Metabolic complementarity and genomics of the dual bacterial symbiosis of sharpshooters.</title>
        <authorList>
            <person name="Wu D."/>
            <person name="Daugherty S.C."/>
            <person name="Van Aken S.E."/>
            <person name="Pai G.H."/>
            <person name="Watkins K.L."/>
            <person name="Khouri H."/>
            <person name="Tallon L.J."/>
            <person name="Zaborsky J.M."/>
            <person name="Dunbar H.E."/>
            <person name="Tran P.L."/>
            <person name="Moran N.A."/>
            <person name="Eisen J.A."/>
        </authorList>
    </citation>
    <scope>NUCLEOTIDE SEQUENCE [LARGE SCALE GENOMIC DNA]</scope>
</reference>
<keyword id="KW-0963">Cytoplasm</keyword>
<keyword id="KW-0378">Hydrolase</keyword>
<keyword id="KW-0645">Protease</keyword>
<keyword id="KW-1185">Reference proteome</keyword>
<keyword id="KW-0720">Serine protease</keyword>
<feature type="chain" id="PRO_0000252806" description="ATP-dependent Clp protease proteolytic subunit">
    <location>
        <begin position="1"/>
        <end position="205"/>
    </location>
</feature>
<feature type="active site" description="Nucleophile" evidence="1">
    <location>
        <position position="109"/>
    </location>
</feature>
<feature type="active site" evidence="1">
    <location>
        <position position="134"/>
    </location>
</feature>